<dbReference type="EC" id="3.1.3.11"/>
<dbReference type="EMBL" id="FM211192">
    <property type="protein sequence ID" value="CAR72043.1"/>
    <property type="status" value="ALT_INIT"/>
    <property type="molecule type" value="Genomic_DNA"/>
</dbReference>
<dbReference type="SMR" id="B8ZSG6"/>
<dbReference type="KEGG" id="mlb:MLBr01946"/>
<dbReference type="HOGENOM" id="CLU_054938_0_0_11"/>
<dbReference type="UniPathway" id="UPA00138"/>
<dbReference type="Proteomes" id="UP000006900">
    <property type="component" value="Chromosome"/>
</dbReference>
<dbReference type="GO" id="GO:0005829">
    <property type="term" value="C:cytosol"/>
    <property type="evidence" value="ECO:0007669"/>
    <property type="project" value="TreeGrafter"/>
</dbReference>
<dbReference type="GO" id="GO:0042132">
    <property type="term" value="F:fructose 1,6-bisphosphate 1-phosphatase activity"/>
    <property type="evidence" value="ECO:0007669"/>
    <property type="project" value="UniProtKB-EC"/>
</dbReference>
<dbReference type="GO" id="GO:0046872">
    <property type="term" value="F:metal ion binding"/>
    <property type="evidence" value="ECO:0007669"/>
    <property type="project" value="UniProtKB-KW"/>
</dbReference>
<dbReference type="GO" id="GO:0030388">
    <property type="term" value="P:fructose 1,6-bisphosphate metabolic process"/>
    <property type="evidence" value="ECO:0007669"/>
    <property type="project" value="TreeGrafter"/>
</dbReference>
<dbReference type="GO" id="GO:0006094">
    <property type="term" value="P:gluconeogenesis"/>
    <property type="evidence" value="ECO:0007669"/>
    <property type="project" value="UniProtKB-UniPathway"/>
</dbReference>
<dbReference type="GO" id="GO:0006071">
    <property type="term" value="P:glycerol metabolic process"/>
    <property type="evidence" value="ECO:0007669"/>
    <property type="project" value="InterPro"/>
</dbReference>
<dbReference type="CDD" id="cd01516">
    <property type="entry name" value="FBPase_glpX"/>
    <property type="match status" value="1"/>
</dbReference>
<dbReference type="FunFam" id="3.40.190.90:FF:000001">
    <property type="entry name" value="Fructose-1,6-bisphosphatase"/>
    <property type="match status" value="1"/>
</dbReference>
<dbReference type="Gene3D" id="3.40.190.90">
    <property type="match status" value="1"/>
</dbReference>
<dbReference type="Gene3D" id="3.30.540.10">
    <property type="entry name" value="Fructose-1,6-Bisphosphatase, subunit A, domain 1"/>
    <property type="match status" value="1"/>
</dbReference>
<dbReference type="InterPro" id="IPR004464">
    <property type="entry name" value="FBPase_class-2/SBPase"/>
</dbReference>
<dbReference type="NCBIfam" id="TIGR00330">
    <property type="entry name" value="glpX"/>
    <property type="match status" value="1"/>
</dbReference>
<dbReference type="PANTHER" id="PTHR30447:SF0">
    <property type="entry name" value="FRUCTOSE-1,6-BISPHOSPHATASE 1 CLASS 2-RELATED"/>
    <property type="match status" value="1"/>
</dbReference>
<dbReference type="PANTHER" id="PTHR30447">
    <property type="entry name" value="FRUCTOSE-1,6-BISPHOSPHATASE CLASS 2"/>
    <property type="match status" value="1"/>
</dbReference>
<dbReference type="Pfam" id="PF03320">
    <property type="entry name" value="FBPase_glpX"/>
    <property type="match status" value="1"/>
</dbReference>
<dbReference type="PIRSF" id="PIRSF004532">
    <property type="entry name" value="GlpX"/>
    <property type="match status" value="1"/>
</dbReference>
<dbReference type="SUPFAM" id="SSF56655">
    <property type="entry name" value="Carbohydrate phosphatase"/>
    <property type="match status" value="1"/>
</dbReference>
<sequence>MTAEGDGSFKPGPPTERRGEAPDRNLAMELVRVTEAGAMAAGRWVGRGNKEGGDGAAVDTIRELVNTVSMRGVVVIGEGEKDHAPMLYNGEEVGNGDGPDCDFAVDPIDGTTLMSKGMPNAISVLAVADRGAMFDPSAVFYMNKITVGPDAAHVLDITAPIGENIRAVAKVKDLSVRDMTVCILDRPRHAQLIDDVRATGARIRLITDGDVAGAISACRPQSGTDMLAGIGGTPEGIIAAAAIRCMGGAIQAQLAPRDDVERRKALDAGYNLDRILTTEDLVSGENVFFCATGVTDGDLLKGVRYYAGGCTTQSIVMRSKSGTVRMIEAYHRLSKLNEYSAIDFTGDNNAAYPLP</sequence>
<organism>
    <name type="scientific">Mycobacterium leprae (strain Br4923)</name>
    <dbReference type="NCBI Taxonomy" id="561304"/>
    <lineage>
        <taxon>Bacteria</taxon>
        <taxon>Bacillati</taxon>
        <taxon>Actinomycetota</taxon>
        <taxon>Actinomycetes</taxon>
        <taxon>Mycobacteriales</taxon>
        <taxon>Mycobacteriaceae</taxon>
        <taxon>Mycobacterium</taxon>
    </lineage>
</organism>
<protein>
    <recommendedName>
        <fullName>Fructose-1,6-bisphosphatase class 2</fullName>
        <shortName>FBPase class 2</shortName>
        <ecNumber>3.1.3.11</ecNumber>
    </recommendedName>
    <alternativeName>
        <fullName>D-fructose-1,6-bisphosphate 1-phosphohydrolase class 2</fullName>
    </alternativeName>
</protein>
<reference key="1">
    <citation type="journal article" date="2009" name="Nat. Genet.">
        <title>Comparative genomic and phylogeographic analysis of Mycobacterium leprae.</title>
        <authorList>
            <person name="Monot M."/>
            <person name="Honore N."/>
            <person name="Garnier T."/>
            <person name="Zidane N."/>
            <person name="Sherafi D."/>
            <person name="Paniz-Mondolfi A."/>
            <person name="Matsuoka M."/>
            <person name="Taylor G.M."/>
            <person name="Donoghue H.D."/>
            <person name="Bouwman A."/>
            <person name="Mays S."/>
            <person name="Watson C."/>
            <person name="Lockwood D."/>
            <person name="Khamispour A."/>
            <person name="Dowlati Y."/>
            <person name="Jianping S."/>
            <person name="Rea T.H."/>
            <person name="Vera-Cabrera L."/>
            <person name="Stefani M.M."/>
            <person name="Banu S."/>
            <person name="Macdonald M."/>
            <person name="Sapkota B.R."/>
            <person name="Spencer J.S."/>
            <person name="Thomas J."/>
            <person name="Harshman K."/>
            <person name="Singh P."/>
            <person name="Busso P."/>
            <person name="Gattiker A."/>
            <person name="Rougemont J."/>
            <person name="Brennan P.J."/>
            <person name="Cole S.T."/>
        </authorList>
    </citation>
    <scope>NUCLEOTIDE SEQUENCE [LARGE SCALE GENOMIC DNA]</scope>
    <source>
        <strain>Br4923</strain>
    </source>
</reference>
<evidence type="ECO:0000250" key="1"/>
<evidence type="ECO:0000256" key="2">
    <source>
        <dbReference type="SAM" id="MobiDB-lite"/>
    </source>
</evidence>
<evidence type="ECO:0000305" key="3"/>
<proteinExistence type="inferred from homology"/>
<keyword id="KW-0119">Carbohydrate metabolism</keyword>
<keyword id="KW-0963">Cytoplasm</keyword>
<keyword id="KW-0378">Hydrolase</keyword>
<keyword id="KW-0464">Manganese</keyword>
<keyword id="KW-0479">Metal-binding</keyword>
<name>GLPX_MYCLB</name>
<accession>B8ZSG6</accession>
<feature type="chain" id="PRO_0000403677" description="Fructose-1,6-bisphosphatase class 2">
    <location>
        <begin position="1"/>
        <end position="355"/>
    </location>
</feature>
<feature type="region of interest" description="Disordered" evidence="2">
    <location>
        <begin position="1"/>
        <end position="25"/>
    </location>
</feature>
<feature type="binding site" evidence="1">
    <location>
        <position position="54"/>
    </location>
    <ligand>
        <name>Mn(2+)</name>
        <dbReference type="ChEBI" id="CHEBI:29035"/>
        <label>1</label>
    </ligand>
</feature>
<feature type="binding site" evidence="1">
    <location>
        <position position="78"/>
    </location>
    <ligand>
        <name>Mn(2+)</name>
        <dbReference type="ChEBI" id="CHEBI:29035"/>
        <label>1</label>
    </ligand>
</feature>
<feature type="binding site" evidence="1">
    <location>
        <position position="106"/>
    </location>
    <ligand>
        <name>Mn(2+)</name>
        <dbReference type="ChEBI" id="CHEBI:29035"/>
        <label>2</label>
    </ligand>
</feature>
<feature type="binding site" evidence="1">
    <location>
        <begin position="109"/>
        <end position="111"/>
    </location>
    <ligand>
        <name>substrate</name>
    </ligand>
</feature>
<feature type="binding site" evidence="1">
    <location>
        <position position="109"/>
    </location>
    <ligand>
        <name>Mn(2+)</name>
        <dbReference type="ChEBI" id="CHEBI:29035"/>
        <label>2</label>
    </ligand>
</feature>
<feature type="binding site" evidence="1">
    <location>
        <position position="141"/>
    </location>
    <ligand>
        <name>substrate</name>
    </ligand>
</feature>
<feature type="binding site" evidence="1">
    <location>
        <begin position="186"/>
        <end position="188"/>
    </location>
    <ligand>
        <name>substrate</name>
    </ligand>
</feature>
<feature type="binding site" evidence="1">
    <location>
        <begin position="208"/>
        <end position="210"/>
    </location>
    <ligand>
        <name>substrate</name>
    </ligand>
</feature>
<feature type="binding site" evidence="1">
    <location>
        <position position="232"/>
    </location>
    <ligand>
        <name>substrate</name>
    </ligand>
</feature>
<feature type="binding site" evidence="1">
    <location>
        <position position="235"/>
    </location>
    <ligand>
        <name>Mn(2+)</name>
        <dbReference type="ChEBI" id="CHEBI:29035"/>
        <label>2</label>
    </ligand>
</feature>
<comment type="function">
    <text evidence="1">Catalyzes the hydrolysis of fructose 1,6-bisphosphate to fructose 6-phosphate.</text>
</comment>
<comment type="catalytic activity">
    <reaction>
        <text>beta-D-fructose 1,6-bisphosphate + H2O = beta-D-fructose 6-phosphate + phosphate</text>
        <dbReference type="Rhea" id="RHEA:11064"/>
        <dbReference type="ChEBI" id="CHEBI:15377"/>
        <dbReference type="ChEBI" id="CHEBI:32966"/>
        <dbReference type="ChEBI" id="CHEBI:43474"/>
        <dbReference type="ChEBI" id="CHEBI:57634"/>
        <dbReference type="EC" id="3.1.3.11"/>
    </reaction>
</comment>
<comment type="cofactor">
    <cofactor evidence="1">
        <name>Mn(2+)</name>
        <dbReference type="ChEBI" id="CHEBI:29035"/>
    </cofactor>
</comment>
<comment type="pathway">
    <text>Carbohydrate biosynthesis; gluconeogenesis.</text>
</comment>
<comment type="subcellular location">
    <subcellularLocation>
        <location evidence="1">Cytoplasm</location>
    </subcellularLocation>
</comment>
<comment type="similarity">
    <text evidence="3">Belongs to the FBPase class 2 family.</text>
</comment>
<comment type="sequence caution" evidence="3">
    <conflict type="erroneous initiation">
        <sequence resource="EMBL-CDS" id="CAR72043"/>
    </conflict>
    <text>Truncated N-terminus.</text>
</comment>
<gene>
    <name type="primary">glpX</name>
    <name type="ordered locus">MLBr01946</name>
</gene>